<proteinExistence type="evidence at protein level"/>
<keyword id="KW-0049">Antioxidant</keyword>
<keyword id="KW-0150">Chloroplast</keyword>
<keyword id="KW-0560">Oxidoreductase</keyword>
<keyword id="KW-0575">Peroxidase</keyword>
<keyword id="KW-0597">Phosphoprotein</keyword>
<keyword id="KW-0934">Plastid</keyword>
<keyword id="KW-0676">Redox-active center</keyword>
<keyword id="KW-1185">Reference proteome</keyword>
<keyword id="KW-0809">Transit peptide</keyword>
<organism>
    <name type="scientific">Arabidopsis thaliana</name>
    <name type="common">Mouse-ear cress</name>
    <dbReference type="NCBI Taxonomy" id="3702"/>
    <lineage>
        <taxon>Eukaryota</taxon>
        <taxon>Viridiplantae</taxon>
        <taxon>Streptophyta</taxon>
        <taxon>Embryophyta</taxon>
        <taxon>Tracheophyta</taxon>
        <taxon>Spermatophyta</taxon>
        <taxon>Magnoliopsida</taxon>
        <taxon>eudicotyledons</taxon>
        <taxon>Gunneridae</taxon>
        <taxon>Pentapetalae</taxon>
        <taxon>rosids</taxon>
        <taxon>malvids</taxon>
        <taxon>Brassicales</taxon>
        <taxon>Brassicaceae</taxon>
        <taxon>Camelineae</taxon>
        <taxon>Arabidopsis</taxon>
    </lineage>
</organism>
<name>PRX2E_ARATH</name>
<reference key="1">
    <citation type="journal article" date="2000" name="Nature">
        <title>Sequence and analysis of chromosome 3 of the plant Arabidopsis thaliana.</title>
        <authorList>
            <person name="Salanoubat M."/>
            <person name="Lemcke K."/>
            <person name="Rieger M."/>
            <person name="Ansorge W."/>
            <person name="Unseld M."/>
            <person name="Fartmann B."/>
            <person name="Valle G."/>
            <person name="Bloecker H."/>
            <person name="Perez-Alonso M."/>
            <person name="Obermaier B."/>
            <person name="Delseny M."/>
            <person name="Boutry M."/>
            <person name="Grivell L.A."/>
            <person name="Mache R."/>
            <person name="Puigdomenech P."/>
            <person name="De Simone V."/>
            <person name="Choisne N."/>
            <person name="Artiguenave F."/>
            <person name="Robert C."/>
            <person name="Brottier P."/>
            <person name="Wincker P."/>
            <person name="Cattolico L."/>
            <person name="Weissenbach J."/>
            <person name="Saurin W."/>
            <person name="Quetier F."/>
            <person name="Schaefer M."/>
            <person name="Mueller-Auer S."/>
            <person name="Gabel C."/>
            <person name="Fuchs M."/>
            <person name="Benes V."/>
            <person name="Wurmbach E."/>
            <person name="Drzonek H."/>
            <person name="Erfle H."/>
            <person name="Jordan N."/>
            <person name="Bangert S."/>
            <person name="Wiedelmann R."/>
            <person name="Kranz H."/>
            <person name="Voss H."/>
            <person name="Holland R."/>
            <person name="Brandt P."/>
            <person name="Nyakatura G."/>
            <person name="Vezzi A."/>
            <person name="D'Angelo M."/>
            <person name="Pallavicini A."/>
            <person name="Toppo S."/>
            <person name="Simionati B."/>
            <person name="Conrad A."/>
            <person name="Hornischer K."/>
            <person name="Kauer G."/>
            <person name="Loehnert T.-H."/>
            <person name="Nordsiek G."/>
            <person name="Reichelt J."/>
            <person name="Scharfe M."/>
            <person name="Schoen O."/>
            <person name="Bargues M."/>
            <person name="Terol J."/>
            <person name="Climent J."/>
            <person name="Navarro P."/>
            <person name="Collado C."/>
            <person name="Perez-Perez A."/>
            <person name="Ottenwaelder B."/>
            <person name="Duchemin D."/>
            <person name="Cooke R."/>
            <person name="Laudie M."/>
            <person name="Berger-Llauro C."/>
            <person name="Purnelle B."/>
            <person name="Masuy D."/>
            <person name="de Haan M."/>
            <person name="Maarse A.C."/>
            <person name="Alcaraz J.-P."/>
            <person name="Cottet A."/>
            <person name="Casacuberta E."/>
            <person name="Monfort A."/>
            <person name="Argiriou A."/>
            <person name="Flores M."/>
            <person name="Liguori R."/>
            <person name="Vitale D."/>
            <person name="Mannhaupt G."/>
            <person name="Haase D."/>
            <person name="Schoof H."/>
            <person name="Rudd S."/>
            <person name="Zaccaria P."/>
            <person name="Mewes H.-W."/>
            <person name="Mayer K.F.X."/>
            <person name="Kaul S."/>
            <person name="Town C.D."/>
            <person name="Koo H.L."/>
            <person name="Tallon L.J."/>
            <person name="Jenkins J."/>
            <person name="Rooney T."/>
            <person name="Rizzo M."/>
            <person name="Walts A."/>
            <person name="Utterback T."/>
            <person name="Fujii C.Y."/>
            <person name="Shea T.P."/>
            <person name="Creasy T.H."/>
            <person name="Haas B."/>
            <person name="Maiti R."/>
            <person name="Wu D."/>
            <person name="Peterson J."/>
            <person name="Van Aken S."/>
            <person name="Pai G."/>
            <person name="Militscher J."/>
            <person name="Sellers P."/>
            <person name="Gill J.E."/>
            <person name="Feldblyum T.V."/>
            <person name="Preuss D."/>
            <person name="Lin X."/>
            <person name="Nierman W.C."/>
            <person name="Salzberg S.L."/>
            <person name="White O."/>
            <person name="Venter J.C."/>
            <person name="Fraser C.M."/>
            <person name="Kaneko T."/>
            <person name="Nakamura Y."/>
            <person name="Sato S."/>
            <person name="Kato T."/>
            <person name="Asamizu E."/>
            <person name="Sasamoto S."/>
            <person name="Kimura T."/>
            <person name="Idesawa K."/>
            <person name="Kawashima K."/>
            <person name="Kishida Y."/>
            <person name="Kiyokawa C."/>
            <person name="Kohara M."/>
            <person name="Matsumoto M."/>
            <person name="Matsuno A."/>
            <person name="Muraki A."/>
            <person name="Nakayama S."/>
            <person name="Nakazaki N."/>
            <person name="Shinpo S."/>
            <person name="Takeuchi C."/>
            <person name="Wada T."/>
            <person name="Watanabe A."/>
            <person name="Yamada M."/>
            <person name="Yasuda M."/>
            <person name="Tabata S."/>
        </authorList>
    </citation>
    <scope>NUCLEOTIDE SEQUENCE [LARGE SCALE GENOMIC DNA]</scope>
    <source>
        <strain>cv. Columbia</strain>
    </source>
</reference>
<reference key="2">
    <citation type="journal article" date="2017" name="Plant J.">
        <title>Araport11: a complete reannotation of the Arabidopsis thaliana reference genome.</title>
        <authorList>
            <person name="Cheng C.Y."/>
            <person name="Krishnakumar V."/>
            <person name="Chan A.P."/>
            <person name="Thibaud-Nissen F."/>
            <person name="Schobel S."/>
            <person name="Town C.D."/>
        </authorList>
    </citation>
    <scope>GENOME REANNOTATION</scope>
    <source>
        <strain>cv. Columbia</strain>
    </source>
</reference>
<reference key="3">
    <citation type="journal article" date="2003" name="Science">
        <title>Empirical analysis of transcriptional activity in the Arabidopsis genome.</title>
        <authorList>
            <person name="Yamada K."/>
            <person name="Lim J."/>
            <person name="Dale J.M."/>
            <person name="Chen H."/>
            <person name="Shinn P."/>
            <person name="Palm C.J."/>
            <person name="Southwick A.M."/>
            <person name="Wu H.C."/>
            <person name="Kim C.J."/>
            <person name="Nguyen M."/>
            <person name="Pham P.K."/>
            <person name="Cheuk R.F."/>
            <person name="Karlin-Newmann G."/>
            <person name="Liu S.X."/>
            <person name="Lam B."/>
            <person name="Sakano H."/>
            <person name="Wu T."/>
            <person name="Yu G."/>
            <person name="Miranda M."/>
            <person name="Quach H.L."/>
            <person name="Tripp M."/>
            <person name="Chang C.H."/>
            <person name="Lee J.M."/>
            <person name="Toriumi M.J."/>
            <person name="Chan M.M."/>
            <person name="Tang C.C."/>
            <person name="Onodera C.S."/>
            <person name="Deng J.M."/>
            <person name="Akiyama K."/>
            <person name="Ansari Y."/>
            <person name="Arakawa T."/>
            <person name="Banh J."/>
            <person name="Banno F."/>
            <person name="Bowser L."/>
            <person name="Brooks S.Y."/>
            <person name="Carninci P."/>
            <person name="Chao Q."/>
            <person name="Choy N."/>
            <person name="Enju A."/>
            <person name="Goldsmith A.D."/>
            <person name="Gurjal M."/>
            <person name="Hansen N.F."/>
            <person name="Hayashizaki Y."/>
            <person name="Johnson-Hopson C."/>
            <person name="Hsuan V.W."/>
            <person name="Iida K."/>
            <person name="Karnes M."/>
            <person name="Khan S."/>
            <person name="Koesema E."/>
            <person name="Ishida J."/>
            <person name="Jiang P.X."/>
            <person name="Jones T."/>
            <person name="Kawai J."/>
            <person name="Kamiya A."/>
            <person name="Meyers C."/>
            <person name="Nakajima M."/>
            <person name="Narusaka M."/>
            <person name="Seki M."/>
            <person name="Sakurai T."/>
            <person name="Satou M."/>
            <person name="Tamse R."/>
            <person name="Vaysberg M."/>
            <person name="Wallender E.K."/>
            <person name="Wong C."/>
            <person name="Yamamura Y."/>
            <person name="Yuan S."/>
            <person name="Shinozaki K."/>
            <person name="Davis R.W."/>
            <person name="Theologis A."/>
            <person name="Ecker J.R."/>
        </authorList>
    </citation>
    <scope>NUCLEOTIDE SEQUENCE [LARGE SCALE MRNA]</scope>
    <source>
        <strain>cv. Columbia</strain>
    </source>
</reference>
<reference key="4">
    <citation type="journal article" date="2002" name="Plant Physiol. Biochem.">
        <title>Type II peroxiredoxin C, a member of the peroxiredoxin family of Arabidopsis thaliana: its expression and activity in comparison with other peroxiredoxins.</title>
        <authorList>
            <person name="Horling F."/>
            <person name="Koenig J."/>
            <person name="Dietz K.-J."/>
        </authorList>
    </citation>
    <scope>TISSUE SPECIFICITY</scope>
    <scope>INDUCTION</scope>
</reference>
<reference key="5">
    <citation type="journal article" date="2003" name="Plant Physiol.">
        <title>Resemblance and dissemblance of Arabidopsis type II peroxiredoxins: similar sequences for divergent gene expression, protein localization, and activity.</title>
        <authorList>
            <person name="Brehelin C."/>
            <person name="Meyer E.H."/>
            <person name="de Souris J.-P."/>
            <person name="Bonnard G."/>
            <person name="Meyer Y."/>
        </authorList>
    </citation>
    <scope>SUBUNIT</scope>
    <scope>SUBCELLULAR LOCATION</scope>
    <scope>TISSUE SPECIFICITY</scope>
</reference>
<reference key="6">
    <citation type="journal article" date="2005" name="Free Radic. Biol. Med.">
        <title>The plant multigenic family of thiol peroxidases.</title>
        <authorList>
            <person name="Rouhier N."/>
            <person name="Jacquot J.-P."/>
        </authorList>
    </citation>
    <scope>GENE FAMILY ORGANIZATION</scope>
    <scope>NOMENCLATURE</scope>
</reference>
<reference key="7">
    <citation type="journal article" date="2012" name="J. Proteome Res.">
        <title>Identification of phosphoproteins in Arabidopsis thaliana leaves using polyethylene glycol fractionation, immobilized metal-ion affinity chromatography, two-dimensional gel electrophoresis and mass spectrometry.</title>
        <authorList>
            <person name="Aryal U.K."/>
            <person name="Krochko J.E."/>
            <person name="Ross A.R."/>
        </authorList>
    </citation>
    <scope>PHOSPHORYLATION [LARGE SCALE ANALYSIS] AT SER-82</scope>
    <scope>IDENTIFICATION BY MASS SPECTROMETRY [LARGE SCALE ANALYSIS]</scope>
</reference>
<feature type="transit peptide" description="Chloroplast" evidence="2">
    <location>
        <begin position="1"/>
        <end position="70"/>
    </location>
</feature>
<feature type="chain" id="PRO_0000282281" description="Peroxiredoxin-2E, chloroplastic">
    <location>
        <begin position="71"/>
        <end position="234"/>
    </location>
</feature>
<feature type="domain" description="Thioredoxin" evidence="3">
    <location>
        <begin position="73"/>
        <end position="234"/>
    </location>
</feature>
<feature type="active site" description="Cysteine sulfenic acid (-SOH) intermediate" evidence="1">
    <location>
        <position position="121"/>
    </location>
</feature>
<feature type="modified residue" description="Phosphoserine" evidence="8">
    <location>
        <position position="82"/>
    </location>
</feature>
<feature type="sequence conflict" description="In Ref. 3; AAK92817." evidence="6" ref="3">
    <original>A</original>
    <variation>V</variation>
    <location>
        <position position="133"/>
    </location>
</feature>
<accession>Q949U7</accession>
<accession>Q9LF96</accession>
<protein>
    <recommendedName>
        <fullName>Peroxiredoxin-2E, chloroplastic</fullName>
        <ecNumber evidence="1">1.11.1.25</ecNumber>
    </recommendedName>
    <alternativeName>
        <fullName evidence="6">Glutaredoxin-dependent peroxiredoxin</fullName>
    </alternativeName>
    <alternativeName>
        <fullName>Peroxiredoxin IIE</fullName>
    </alternativeName>
    <alternativeName>
        <fullName>Thioredoxin peroxidase 2E</fullName>
    </alternativeName>
</protein>
<comment type="function">
    <text evidence="1 7">Thiol-specific peroxidase that catalyzes the reduction of hydrogen peroxide and organic hydroperoxides to water and alcohols, respectively. Plays a role in cell protection against oxidative stress by detoxifying peroxides (By similarity). May be involved in chloroplast redox homeostasis (Probable).</text>
</comment>
<comment type="catalytic activity">
    <reaction evidence="1">
        <text>[glutaredoxin]-dithiol + a hydroperoxide = [glutaredoxin]-disulfide + an alcohol + H2O</text>
        <dbReference type="Rhea" id="RHEA:62624"/>
        <dbReference type="Rhea" id="RHEA-COMP:10729"/>
        <dbReference type="Rhea" id="RHEA-COMP:10730"/>
        <dbReference type="ChEBI" id="CHEBI:15377"/>
        <dbReference type="ChEBI" id="CHEBI:29950"/>
        <dbReference type="ChEBI" id="CHEBI:30879"/>
        <dbReference type="ChEBI" id="CHEBI:35924"/>
        <dbReference type="ChEBI" id="CHEBI:50058"/>
        <dbReference type="EC" id="1.11.1.25"/>
    </reaction>
</comment>
<comment type="subunit">
    <text evidence="4">Monomer.</text>
</comment>
<comment type="subcellular location">
    <subcellularLocation>
        <location evidence="4">Plastid</location>
        <location evidence="4">Chloroplast stroma</location>
    </subcellularLocation>
</comment>
<comment type="tissue specificity">
    <text evidence="4 5">Expressed in all tissues but predominantly in buds, siliques and seeds.</text>
</comment>
<comment type="induction">
    <text evidence="5">Down-regulated by salt stress.</text>
</comment>
<comment type="miscellaneous">
    <text evidence="1">The active site is a conserved redox-active cysteine residue, the peroxidatic cysteine (C(P)), which makes the nucleophilic attack on the peroxide substrate. The peroxide oxidizes the C(P)-SH to cysteine sulfenic acid (C(P)-SOH), which then reacts with another cysteine residue, the resolving cysteine (C(R)), to form a disulfide bridge. The disulfide is subsequently reduced by an appropriate electron donor to complete the catalytic cycle. In this 1-Cys peroxiredoxin, no C(R) is present and C(P) instead forms a disulfide with a cysteine from another protein or with a small thiol molecule.</text>
</comment>
<comment type="similarity">
    <text evidence="6">Belongs to the peroxiredoxin family. Prx5 subfamily.</text>
</comment>
<gene>
    <name type="primary">PRXIIE</name>
    <name type="ordered locus">At3g52960</name>
    <name type="ORF">F8J2_130</name>
</gene>
<dbReference type="EC" id="1.11.1.25" evidence="1"/>
<dbReference type="EMBL" id="AL132969">
    <property type="protein sequence ID" value="CAB86900.1"/>
    <property type="molecule type" value="Genomic_DNA"/>
</dbReference>
<dbReference type="EMBL" id="CP002686">
    <property type="protein sequence ID" value="AEE79018.1"/>
    <property type="molecule type" value="Genomic_DNA"/>
</dbReference>
<dbReference type="EMBL" id="AY050880">
    <property type="protein sequence ID" value="AAK92817.1"/>
    <property type="molecule type" value="mRNA"/>
</dbReference>
<dbReference type="EMBL" id="AY054638">
    <property type="protein sequence ID" value="AAK96829.1"/>
    <property type="molecule type" value="mRNA"/>
</dbReference>
<dbReference type="EMBL" id="AY072493">
    <property type="protein sequence ID" value="AAL66908.1"/>
    <property type="molecule type" value="mRNA"/>
</dbReference>
<dbReference type="EMBL" id="AY150397">
    <property type="protein sequence ID" value="AAN12942.1"/>
    <property type="molecule type" value="mRNA"/>
</dbReference>
<dbReference type="PIR" id="PA0047">
    <property type="entry name" value="PA0047"/>
</dbReference>
<dbReference type="PIR" id="T47553">
    <property type="entry name" value="T47553"/>
</dbReference>
<dbReference type="RefSeq" id="NP_190864.1">
    <property type="nucleotide sequence ID" value="NM_115156.3"/>
</dbReference>
<dbReference type="SMR" id="Q949U7"/>
<dbReference type="BioGRID" id="9779">
    <property type="interactions" value="4"/>
</dbReference>
<dbReference type="FunCoup" id="Q949U7">
    <property type="interactions" value="2019"/>
</dbReference>
<dbReference type="IntAct" id="Q949U7">
    <property type="interactions" value="2"/>
</dbReference>
<dbReference type="STRING" id="3702.Q949U7"/>
<dbReference type="PeroxiBase" id="4353">
    <property type="entry name" value="AtPrxII05"/>
</dbReference>
<dbReference type="iPTMnet" id="Q949U7"/>
<dbReference type="MetOSite" id="Q949U7"/>
<dbReference type="SwissPalm" id="Q949U7"/>
<dbReference type="PaxDb" id="3702-AT3G52960.1"/>
<dbReference type="ProteomicsDB" id="226382"/>
<dbReference type="EnsemblPlants" id="AT3G52960.1">
    <property type="protein sequence ID" value="AT3G52960.1"/>
    <property type="gene ID" value="AT3G52960"/>
</dbReference>
<dbReference type="GeneID" id="824462"/>
<dbReference type="Gramene" id="AT3G52960.1">
    <property type="protein sequence ID" value="AT3G52960.1"/>
    <property type="gene ID" value="AT3G52960"/>
</dbReference>
<dbReference type="KEGG" id="ath:AT3G52960"/>
<dbReference type="Araport" id="AT3G52960"/>
<dbReference type="TAIR" id="AT3G52960">
    <property type="gene designation" value="PRXIIE"/>
</dbReference>
<dbReference type="eggNOG" id="KOG0541">
    <property type="taxonomic scope" value="Eukaryota"/>
</dbReference>
<dbReference type="HOGENOM" id="CLU_072440_0_0_1"/>
<dbReference type="InParanoid" id="Q949U7"/>
<dbReference type="OMA" id="FIRTKDQ"/>
<dbReference type="OrthoDB" id="1882547at2759"/>
<dbReference type="PhylomeDB" id="Q949U7"/>
<dbReference type="BioCyc" id="ARA:AT3G52960-MONOMER"/>
<dbReference type="CD-CODE" id="4299E36E">
    <property type="entry name" value="Nucleolus"/>
</dbReference>
<dbReference type="PRO" id="PR:Q949U7"/>
<dbReference type="Proteomes" id="UP000006548">
    <property type="component" value="Chromosome 3"/>
</dbReference>
<dbReference type="ExpressionAtlas" id="Q949U7">
    <property type="expression patterns" value="baseline and differential"/>
</dbReference>
<dbReference type="GO" id="GO:0009507">
    <property type="term" value="C:chloroplast"/>
    <property type="evidence" value="ECO:0007005"/>
    <property type="project" value="TAIR"/>
</dbReference>
<dbReference type="GO" id="GO:0009941">
    <property type="term" value="C:chloroplast envelope"/>
    <property type="evidence" value="ECO:0007005"/>
    <property type="project" value="TAIR"/>
</dbReference>
<dbReference type="GO" id="GO:0009570">
    <property type="term" value="C:chloroplast stroma"/>
    <property type="evidence" value="ECO:0007005"/>
    <property type="project" value="TAIR"/>
</dbReference>
<dbReference type="GO" id="GO:0005829">
    <property type="term" value="C:cytosol"/>
    <property type="evidence" value="ECO:0007005"/>
    <property type="project" value="TAIR"/>
</dbReference>
<dbReference type="GO" id="GO:0009536">
    <property type="term" value="C:plastid"/>
    <property type="evidence" value="ECO:0007005"/>
    <property type="project" value="TAIR"/>
</dbReference>
<dbReference type="GO" id="GO:0009579">
    <property type="term" value="C:thylakoid"/>
    <property type="evidence" value="ECO:0007005"/>
    <property type="project" value="TAIR"/>
</dbReference>
<dbReference type="GO" id="GO:0008379">
    <property type="term" value="F:thioredoxin peroxidase activity"/>
    <property type="evidence" value="ECO:0007669"/>
    <property type="project" value="InterPro"/>
</dbReference>
<dbReference type="GO" id="GO:0034599">
    <property type="term" value="P:cellular response to oxidative stress"/>
    <property type="evidence" value="ECO:0007669"/>
    <property type="project" value="InterPro"/>
</dbReference>
<dbReference type="CDD" id="cd03013">
    <property type="entry name" value="PRX5_like"/>
    <property type="match status" value="1"/>
</dbReference>
<dbReference type="FunFam" id="3.40.30.10:FF:000020">
    <property type="entry name" value="Peroxiredoxin"/>
    <property type="match status" value="1"/>
</dbReference>
<dbReference type="Gene3D" id="3.40.30.10">
    <property type="entry name" value="Glutaredoxin"/>
    <property type="match status" value="1"/>
</dbReference>
<dbReference type="InterPro" id="IPR037944">
    <property type="entry name" value="PRX5-like"/>
</dbReference>
<dbReference type="InterPro" id="IPR013740">
    <property type="entry name" value="Redoxin"/>
</dbReference>
<dbReference type="InterPro" id="IPR036249">
    <property type="entry name" value="Thioredoxin-like_sf"/>
</dbReference>
<dbReference type="InterPro" id="IPR013766">
    <property type="entry name" value="Thioredoxin_domain"/>
</dbReference>
<dbReference type="PANTHER" id="PTHR10430">
    <property type="entry name" value="PEROXIREDOXIN"/>
    <property type="match status" value="1"/>
</dbReference>
<dbReference type="PANTHER" id="PTHR10430:SF16">
    <property type="entry name" value="PEROXIREDOXIN-5, MITOCHONDRIAL"/>
    <property type="match status" value="1"/>
</dbReference>
<dbReference type="Pfam" id="PF08534">
    <property type="entry name" value="Redoxin"/>
    <property type="match status" value="1"/>
</dbReference>
<dbReference type="SUPFAM" id="SSF52833">
    <property type="entry name" value="Thioredoxin-like"/>
    <property type="match status" value="1"/>
</dbReference>
<dbReference type="PROSITE" id="PS51352">
    <property type="entry name" value="THIOREDOXIN_2"/>
    <property type="match status" value="1"/>
</dbReference>
<evidence type="ECO:0000250" key="1">
    <source>
        <dbReference type="UniProtKB" id="A9PCL4"/>
    </source>
</evidence>
<evidence type="ECO:0000255" key="2"/>
<evidence type="ECO:0000255" key="3">
    <source>
        <dbReference type="PROSITE-ProRule" id="PRU00691"/>
    </source>
</evidence>
<evidence type="ECO:0000269" key="4">
    <source>
    </source>
</evidence>
<evidence type="ECO:0000269" key="5">
    <source ref="4"/>
</evidence>
<evidence type="ECO:0000305" key="6"/>
<evidence type="ECO:0000305" key="7">
    <source>
    </source>
</evidence>
<evidence type="ECO:0007744" key="8">
    <source>
    </source>
</evidence>
<sequence length="234" mass="24684">MATSLSVSRFMSSSATVISVAKPLLSPTVSFTAPLSFTRSLAPNLSLKFRNRRTNSASATTRSFATTPVTASISVGDKLPDSTLSYLDPSTGDVKTVTVSSLTAGKKTILFAVPGAFTPTCSQKHVPGFVSKAGELRSKGIDVIACISVNDAFVMEAWRKDLGINDEVMLLSDGNGEFTGKLGVELDLRDKPVGLGVRSRRYAILADDGVVKVLNLEEGGAFTNSSAEDMLKAL</sequence>